<dbReference type="EC" id="3.4.14.11" evidence="1"/>
<dbReference type="EMBL" id="FM177140">
    <property type="protein sequence ID" value="CAQ66946.1"/>
    <property type="molecule type" value="Genomic_DNA"/>
</dbReference>
<dbReference type="SMR" id="B3WEZ5"/>
<dbReference type="ESTHER" id="lacc3-pepx">
    <property type="family name" value="Lactobacillus_peptidase"/>
</dbReference>
<dbReference type="MEROPS" id="S15.001"/>
<dbReference type="KEGG" id="lcb:LCABL_18670"/>
<dbReference type="HOGENOM" id="CLU_011800_0_0_9"/>
<dbReference type="GO" id="GO:0005737">
    <property type="term" value="C:cytoplasm"/>
    <property type="evidence" value="ECO:0007669"/>
    <property type="project" value="UniProtKB-SubCell"/>
</dbReference>
<dbReference type="GO" id="GO:0004177">
    <property type="term" value="F:aminopeptidase activity"/>
    <property type="evidence" value="ECO:0007669"/>
    <property type="project" value="UniProtKB-KW"/>
</dbReference>
<dbReference type="GO" id="GO:0008239">
    <property type="term" value="F:dipeptidyl-peptidase activity"/>
    <property type="evidence" value="ECO:0007669"/>
    <property type="project" value="UniProtKB-UniRule"/>
</dbReference>
<dbReference type="GO" id="GO:0008236">
    <property type="term" value="F:serine-type peptidase activity"/>
    <property type="evidence" value="ECO:0007669"/>
    <property type="project" value="UniProtKB-KW"/>
</dbReference>
<dbReference type="GO" id="GO:0006508">
    <property type="term" value="P:proteolysis"/>
    <property type="evidence" value="ECO:0007669"/>
    <property type="project" value="UniProtKB-KW"/>
</dbReference>
<dbReference type="Gene3D" id="1.10.246.70">
    <property type="match status" value="1"/>
</dbReference>
<dbReference type="Gene3D" id="3.40.50.1820">
    <property type="entry name" value="alpha/beta hydrolase"/>
    <property type="match status" value="1"/>
</dbReference>
<dbReference type="Gene3D" id="2.60.120.260">
    <property type="entry name" value="Galactose-binding domain-like"/>
    <property type="match status" value="1"/>
</dbReference>
<dbReference type="HAMAP" id="MF_00698">
    <property type="entry name" value="Aminopeptidase_S15"/>
    <property type="match status" value="1"/>
</dbReference>
<dbReference type="InterPro" id="IPR029058">
    <property type="entry name" value="AB_hydrolase_fold"/>
</dbReference>
<dbReference type="InterPro" id="IPR008979">
    <property type="entry name" value="Galactose-bd-like_sf"/>
</dbReference>
<dbReference type="InterPro" id="IPR008252">
    <property type="entry name" value="Pept_S15_Xpro"/>
</dbReference>
<dbReference type="InterPro" id="IPR015251">
    <property type="entry name" value="PepX_N_dom"/>
</dbReference>
<dbReference type="InterPro" id="IPR036313">
    <property type="entry name" value="PepX_N_dom_sf"/>
</dbReference>
<dbReference type="InterPro" id="IPR000383">
    <property type="entry name" value="Xaa-Pro-like_dom"/>
</dbReference>
<dbReference type="InterPro" id="IPR013736">
    <property type="entry name" value="Xaa-Pro_dipept_C"/>
</dbReference>
<dbReference type="NCBIfam" id="NF003781">
    <property type="entry name" value="PRK05371.1-2"/>
    <property type="match status" value="1"/>
</dbReference>
<dbReference type="Pfam" id="PF02129">
    <property type="entry name" value="Peptidase_S15"/>
    <property type="match status" value="1"/>
</dbReference>
<dbReference type="Pfam" id="PF08530">
    <property type="entry name" value="PepX_C"/>
    <property type="match status" value="1"/>
</dbReference>
<dbReference type="Pfam" id="PF09168">
    <property type="entry name" value="PepX_N"/>
    <property type="match status" value="1"/>
</dbReference>
<dbReference type="PRINTS" id="PR00923">
    <property type="entry name" value="LACTOPTASE"/>
</dbReference>
<dbReference type="SMART" id="SM00939">
    <property type="entry name" value="PepX_C"/>
    <property type="match status" value="1"/>
</dbReference>
<dbReference type="SMART" id="SM00940">
    <property type="entry name" value="PepX_N"/>
    <property type="match status" value="1"/>
</dbReference>
<dbReference type="SUPFAM" id="SSF53474">
    <property type="entry name" value="alpha/beta-Hydrolases"/>
    <property type="match status" value="1"/>
</dbReference>
<dbReference type="SUPFAM" id="SSF49785">
    <property type="entry name" value="Galactose-binding domain-like"/>
    <property type="match status" value="1"/>
</dbReference>
<dbReference type="SUPFAM" id="SSF81761">
    <property type="entry name" value="X-Prolyl dipeptidyl aminopeptidase PepX, N-terminal domain"/>
    <property type="match status" value="1"/>
</dbReference>
<evidence type="ECO:0000255" key="1">
    <source>
        <dbReference type="HAMAP-Rule" id="MF_00698"/>
    </source>
</evidence>
<name>PEPX_LACCB</name>
<accession>B3WEZ5</accession>
<comment type="function">
    <text evidence="1">Removes N-terminal dipeptides sequentially from polypeptides having unsubstituted N-termini provided that the penultimate residue is proline.</text>
</comment>
<comment type="catalytic activity">
    <reaction evidence="1">
        <text>Hydrolyzes Xaa-Pro-|- bonds to release unblocked, N-terminal dipeptides from substrates including Ala-Pro-|-p-nitroanilide and (sequentially) Tyr-Pro-|-Phe-Pro-|-Gly-Pro-|-Ile.</text>
        <dbReference type="EC" id="3.4.14.11"/>
    </reaction>
</comment>
<comment type="subunit">
    <text evidence="1">Homodimer.</text>
</comment>
<comment type="subcellular location">
    <subcellularLocation>
        <location evidence="1">Cytoplasm</location>
    </subcellularLocation>
</comment>
<comment type="similarity">
    <text evidence="1">Belongs to the peptidase S15 family.</text>
</comment>
<protein>
    <recommendedName>
        <fullName evidence="1">Xaa-Pro dipeptidyl-peptidase</fullName>
        <ecNumber evidence="1">3.4.14.11</ecNumber>
    </recommendedName>
    <alternativeName>
        <fullName evidence="1">X-Pro dipeptidyl-peptidase</fullName>
    </alternativeName>
    <alternativeName>
        <fullName evidence="1">X-prolyl-dipeptidyl aminopeptidase</fullName>
        <shortName evidence="1">X-PDAP</shortName>
    </alternativeName>
</protein>
<proteinExistence type="inferred from homology"/>
<organism>
    <name type="scientific">Lacticaseibacillus casei (strain BL23)</name>
    <name type="common">Lactobacillus casei</name>
    <dbReference type="NCBI Taxonomy" id="543734"/>
    <lineage>
        <taxon>Bacteria</taxon>
        <taxon>Bacillati</taxon>
        <taxon>Bacillota</taxon>
        <taxon>Bacilli</taxon>
        <taxon>Lactobacillales</taxon>
        <taxon>Lactobacillaceae</taxon>
        <taxon>Lacticaseibacillus</taxon>
    </lineage>
</organism>
<sequence>MKLNQFARLTPDFKVQVAELKQIGLQADPDDAFSQSATDLFNAFFPEAYTLAAKEDKLAQVAVNMDQTLAAWLAKKPSKMTRRDFYNVALQLLGFEAFTDFDLNDPFKMMTATKLPSLDHDLTSTADLLKAVYLLLNTRTKHLVSYLDDLANRGFLKDFQKKQKKPTHLLFNGKVQQVFDARQAVREVVWIESDMDTDHDGQRDLLEATIYRPKATDQGLKVPVLFTANPYFHGTNDVTAVTHVPETTLAVKTHGASKAEVTANPEEPANLPHHPVNGEATQAEAYAEENSMYAFNDYFLARGFAVVYSAGVGTRYSDGFRTTGGPEETDGAVAVIEWLTGKRRAFTNRTDGITIKAWWSTGLVAMTGKSYLATLAMAAATTGVDGLKTIVADAGISSWYDYYRENGLVVAPGGFQGEDADVLAVDTFSRQKSGGDLINIKQAWEKHLATITHDQDRTTGAYNTWWDARNYRKNANKVKADVVLIHGLNDWNVKPTNAIKFWEAIADLPIQKKLVLHQGQHVYVHNVRSLDFLDMMNLWLTHELLGEANGAEDVLPNVVVQDNVAVQTWSAYQNFASPAAEHVTNTRNLKTDFEAATDQFTDHATATFNAQHDTSASFETAIITPNSAYANSRLWLTQPPLERDQTLEGIPHLELTLAIDAPTGILSVRLIDLGMAKRFGETAATVALNGLQLGFDYKTTDILEFKPTAKPTPSKLISLGHINLQNPKNAYEVQRITPGQPFHISLDLQPTHYHLPAGRQLALVIHGADMAQTIRPIKTTHYQIDLANSSITLPYRI</sequence>
<feature type="chain" id="PRO_1000132340" description="Xaa-Pro dipeptidyl-peptidase">
    <location>
        <begin position="1"/>
        <end position="797"/>
    </location>
</feature>
<feature type="active site" description="Charge relay system" evidence="1">
    <location>
        <position position="370"/>
    </location>
</feature>
<feature type="active site" description="Charge relay system" evidence="1">
    <location>
        <position position="490"/>
    </location>
</feature>
<feature type="active site" description="Charge relay system" evidence="1">
    <location>
        <position position="521"/>
    </location>
</feature>
<gene>
    <name evidence="1" type="primary">pepX</name>
    <name type="ordered locus">LCABL_18670</name>
</gene>
<reference key="1">
    <citation type="submission" date="2008-06" db="EMBL/GenBank/DDBJ databases">
        <title>Lactobacillus casei BL23 complete genome sequence.</title>
        <authorList>
            <person name="Maze A."/>
            <person name="Boel G."/>
            <person name="Bourand A."/>
            <person name="Loux V."/>
            <person name="Gibrat J.F."/>
            <person name="Zuniga M."/>
            <person name="Hartke A."/>
            <person name="Deutscher J."/>
        </authorList>
    </citation>
    <scope>NUCLEOTIDE SEQUENCE [LARGE SCALE GENOMIC DNA]</scope>
    <source>
        <strain>BL23</strain>
    </source>
</reference>
<keyword id="KW-0031">Aminopeptidase</keyword>
<keyword id="KW-0963">Cytoplasm</keyword>
<keyword id="KW-0378">Hydrolase</keyword>
<keyword id="KW-0645">Protease</keyword>
<keyword id="KW-0720">Serine protease</keyword>